<organism>
    <name type="scientific">Rattus norvegicus</name>
    <name type="common">Rat</name>
    <dbReference type="NCBI Taxonomy" id="10116"/>
    <lineage>
        <taxon>Eukaryota</taxon>
        <taxon>Metazoa</taxon>
        <taxon>Chordata</taxon>
        <taxon>Craniata</taxon>
        <taxon>Vertebrata</taxon>
        <taxon>Euteleostomi</taxon>
        <taxon>Mammalia</taxon>
        <taxon>Eutheria</taxon>
        <taxon>Euarchontoglires</taxon>
        <taxon>Glires</taxon>
        <taxon>Rodentia</taxon>
        <taxon>Myomorpha</taxon>
        <taxon>Muroidea</taxon>
        <taxon>Muridae</taxon>
        <taxon>Murinae</taxon>
        <taxon>Rattus</taxon>
    </lineage>
</organism>
<protein>
    <recommendedName>
        <fullName>H(+)/Cl(-) exchange transporter 4</fullName>
    </recommendedName>
    <alternativeName>
        <fullName>Chloride channel protein 4</fullName>
        <shortName>ClC-4</shortName>
    </alternativeName>
    <alternativeName>
        <fullName>Chloride transporter ClC-4</fullName>
    </alternativeName>
</protein>
<feature type="chain" id="PRO_0000094445" description="H(+)/Cl(-) exchange transporter 4">
    <location>
        <begin position="1"/>
        <end position="747"/>
    </location>
</feature>
<feature type="topological domain" description="Cytoplasmic" evidence="2">
    <location>
        <begin position="1"/>
        <end position="54"/>
    </location>
</feature>
<feature type="transmembrane region" description="Helical" evidence="2">
    <location>
        <begin position="55"/>
        <end position="92"/>
    </location>
</feature>
<feature type="transmembrane region" description="Helical" evidence="2">
    <location>
        <begin position="138"/>
        <end position="161"/>
    </location>
</feature>
<feature type="intramembrane region" description="Helical" evidence="2">
    <location>
        <begin position="170"/>
        <end position="177"/>
    </location>
</feature>
<feature type="transmembrane region" description="Helical" evidence="2">
    <location>
        <begin position="187"/>
        <end position="205"/>
    </location>
</feature>
<feature type="transmembrane region" description="Helical" evidence="2">
    <location>
        <begin position="211"/>
        <end position="230"/>
    </location>
</feature>
<feature type="intramembrane region" description="Helical" evidence="2">
    <location>
        <begin position="242"/>
        <end position="254"/>
    </location>
</feature>
<feature type="intramembrane region" description="Helical" evidence="2">
    <location>
        <begin position="258"/>
        <end position="266"/>
    </location>
</feature>
<feature type="transmembrane region" description="Helical" evidence="2">
    <location>
        <begin position="278"/>
        <end position="296"/>
    </location>
</feature>
<feature type="transmembrane region" description="Helical" evidence="2">
    <location>
        <begin position="320"/>
        <end position="345"/>
    </location>
</feature>
<feature type="transmembrane region" description="Helical" evidence="2">
    <location>
        <begin position="352"/>
        <end position="372"/>
    </location>
</feature>
<feature type="transmembrane region" description="Helical" evidence="2">
    <location>
        <begin position="429"/>
        <end position="449"/>
    </location>
</feature>
<feature type="transmembrane region" description="Helical" evidence="2">
    <location>
        <begin position="454"/>
        <end position="473"/>
    </location>
</feature>
<feature type="intramembrane region" description="Helical" evidence="2">
    <location>
        <begin position="501"/>
        <end position="515"/>
    </location>
</feature>
<feature type="intramembrane region" description="Helical" evidence="2">
    <location>
        <begin position="519"/>
        <end position="530"/>
    </location>
</feature>
<feature type="intramembrane region" description="Note=Loop between two helices" evidence="2">
    <location>
        <begin position="531"/>
        <end position="534"/>
    </location>
</feature>
<feature type="transmembrane region" description="Helical" evidence="2">
    <location>
        <begin position="535"/>
        <end position="553"/>
    </location>
</feature>
<feature type="topological domain" description="Cytoplasmic" evidence="2">
    <location>
        <begin position="554"/>
        <end position="747"/>
    </location>
</feature>
<feature type="domain" description="CBS 1" evidence="5">
    <location>
        <begin position="587"/>
        <end position="653"/>
    </location>
</feature>
<feature type="domain" description="CBS 2" evidence="5">
    <location>
        <begin position="684"/>
        <end position="742"/>
    </location>
</feature>
<feature type="region of interest" description="Required for localization in the endoplasmic reticulum" evidence="3">
    <location>
        <begin position="1"/>
        <end position="50"/>
    </location>
</feature>
<feature type="region of interest" description="Required for localization in the endoplasmic reticulum" evidence="3">
    <location>
        <begin position="654"/>
        <end position="683"/>
    </location>
</feature>
<feature type="short sequence motif" description="Selectivity filter part_1" evidence="1">
    <location>
        <begin position="167"/>
        <end position="171"/>
    </location>
</feature>
<feature type="short sequence motif" description="Selectivity filter part_2" evidence="1">
    <location>
        <begin position="209"/>
        <end position="213"/>
    </location>
</feature>
<feature type="short sequence motif" description="Selectivity filter part_3" evidence="1">
    <location>
        <begin position="454"/>
        <end position="458"/>
    </location>
</feature>
<feature type="binding site" evidence="1">
    <location>
        <position position="168"/>
    </location>
    <ligand>
        <name>chloride</name>
        <dbReference type="ChEBI" id="CHEBI:17996"/>
    </ligand>
</feature>
<feature type="binding site" evidence="1">
    <location>
        <position position="456"/>
    </location>
    <ligand>
        <name>chloride</name>
        <dbReference type="ChEBI" id="CHEBI:17996"/>
    </ligand>
</feature>
<feature type="binding site" evidence="1">
    <location>
        <position position="559"/>
    </location>
    <ligand>
        <name>chloride</name>
        <dbReference type="ChEBI" id="CHEBI:17996"/>
    </ligand>
</feature>
<feature type="binding site" evidence="1">
    <location>
        <position position="597"/>
    </location>
    <ligand>
        <name>ATP</name>
        <dbReference type="ChEBI" id="CHEBI:30616"/>
    </ligand>
</feature>
<feature type="binding site" evidence="1">
    <location>
        <begin position="618"/>
        <end position="620"/>
    </location>
    <ligand>
        <name>ATP</name>
        <dbReference type="ChEBI" id="CHEBI:30616"/>
    </ligand>
</feature>
<feature type="binding site" evidence="1">
    <location>
        <begin position="725"/>
        <end position="728"/>
    </location>
    <ligand>
        <name>ATP</name>
        <dbReference type="ChEBI" id="CHEBI:30616"/>
    </ligand>
</feature>
<feature type="site" description="Mediates proton transfer from the outer aqueous phase to the interior of the protein; involved in linking H(+) and Cl(-) transport" evidence="1">
    <location>
        <position position="211"/>
    </location>
</feature>
<feature type="site" description="Mediates proton transfer from the protein to the inner aqueous phase" evidence="1">
    <location>
        <position position="268"/>
    </location>
</feature>
<sequence>MDFLDEPFPDVGTYEDFHTIDWLREKSRDTDRHRKITSKSKESIWEFIKSLLDAWSGWVVMLLIGLLAGTLAGVIDLAVDWMTDLKEGVCLSAFWYSHEQCCWTSNETTFEDRDKCPLWQKWSELLLSQSEGASAYILNYLMYILWALLFAFLAVSLVRVFAPYACGSGIPEIKTILSGFIIRGYLGKWTLLIKTVTLVLVVSSGLSLGKEGPLVHVACCCGNFFSSLFSKYSKNEGKRREVLSAAAAAGVSVAFGAPIGGVLFSLEEVSYYFPLKTLWRSFFAALVAAFTLRSINPFGNSRLVLFYVEYHTPWYMAELFPFILLGVFGGLWGTVFTRCNIAWCRRRKTTRLGKYPVLEVIVVTAITAIIAYPNPYTRQSTSELISELFNDCGALESSQLCDYINDPNMTRPVDDIPDRPAGVGVYTAMWQLALALIFKIVITIFTFGMKIPSGLFIPSMAVGAMAGRMVGIGVEQLAYHHHDWIIFRNWCRPGADCVTPGLYAMVGAAACLGGVTRMTVSLVVIMFELTGGLEYIVPLMAAAVTSKWVADAFGKEGIYEAHIHLNGYPFLDVKDEFTHRTLATDVMRPRRGEPPLSVLTQDSMTVEDVETLIKETDYNGFPVVVSRDSERLIGFAQRRELILAIKNARQRQEGIVSNSIMYFTEEPPELPANSPHPLKLRRILNLSPFTVTDHTPMETVVDIFRKLGLRQCLVTRSGRLLGIITKKDVLRHMAQMANQDPESIIFN</sequence>
<proteinExistence type="evidence at transcript level"/>
<evidence type="ECO:0000250" key="1"/>
<evidence type="ECO:0000250" key="2">
    <source>
        <dbReference type="UniProtKB" id="P35523"/>
    </source>
</evidence>
<evidence type="ECO:0000250" key="3">
    <source>
        <dbReference type="UniProtKB" id="P51793"/>
    </source>
</evidence>
<evidence type="ECO:0000255" key="4"/>
<evidence type="ECO:0000255" key="5">
    <source>
        <dbReference type="PROSITE-ProRule" id="PRU00703"/>
    </source>
</evidence>
<evidence type="ECO:0000269" key="6">
    <source>
    </source>
</evidence>
<evidence type="ECO:0000269" key="7">
    <source>
    </source>
</evidence>
<evidence type="ECO:0000305" key="8"/>
<keyword id="KW-0050">Antiport</keyword>
<keyword id="KW-0067">ATP-binding</keyword>
<keyword id="KW-0129">CBS domain</keyword>
<keyword id="KW-0868">Chloride</keyword>
<keyword id="KW-0256">Endoplasmic reticulum</keyword>
<keyword id="KW-0967">Endosome</keyword>
<keyword id="KW-0406">Ion transport</keyword>
<keyword id="KW-0458">Lysosome</keyword>
<keyword id="KW-0472">Membrane</keyword>
<keyword id="KW-0547">Nucleotide-binding</keyword>
<keyword id="KW-1185">Reference proteome</keyword>
<keyword id="KW-0677">Repeat</keyword>
<keyword id="KW-0812">Transmembrane</keyword>
<keyword id="KW-1133">Transmembrane helix</keyword>
<keyword id="KW-0813">Transport</keyword>
<accession>P51794</accession>
<comment type="function">
    <text evidence="3">Strongly outwardly rectifying, electrogenic H(+)/Cl(-)exchanger which mediates the exchange of chloride ions against protons (By similarity). The CLC channel family contains both chloride channels and proton-coupled anion transporters that exchange chloride or another anion for protons (By similarity). The presence of conserved gating glutamate residues is typical for family members that function as antiporters (By similarity).</text>
</comment>
<comment type="subcellular location">
    <subcellularLocation>
        <location evidence="6">Early endosome membrane</location>
        <topology evidence="4">Multi-pass membrane protein</topology>
    </subcellularLocation>
    <subcellularLocation>
        <location evidence="6">Late endosome membrane</location>
        <topology evidence="4">Multi-pass membrane protein</topology>
    </subcellularLocation>
    <subcellularLocation>
        <location evidence="3">Endoplasmic reticulum membrane</location>
        <topology evidence="4">Multi-pass membrane protein</topology>
    </subcellularLocation>
    <subcellularLocation>
        <location evidence="3">Lysosome membrane</location>
        <topology evidence="4">Multi-pass membrane protein</topology>
    </subcellularLocation>
    <subcellularLocation>
        <location evidence="3">Recycling endosome membrane</location>
        <topology evidence="4">Multi-pass membrane protein</topology>
    </subcellularLocation>
    <text evidence="3">Localizes to late endosome membrane, lysosome membrane and recycling endosome membrane in the presence of CLCN3.</text>
</comment>
<comment type="tissue specificity">
    <text evidence="7">Strongly expressed in liver and brain, but also in heart, muscle, kidney and spleen.</text>
</comment>
<comment type="similarity">
    <text evidence="8">Belongs to the chloride channel (TC 2.A.49) family. ClC-4/CLCN4 subfamily.</text>
</comment>
<gene>
    <name type="primary">Clcn4</name>
    <name type="synonym">Clcn4-2</name>
</gene>
<dbReference type="EMBL" id="Z36944">
    <property type="protein sequence ID" value="CAA85406.1"/>
    <property type="molecule type" value="mRNA"/>
</dbReference>
<dbReference type="PIR" id="S47327">
    <property type="entry name" value="S47327"/>
</dbReference>
<dbReference type="SMR" id="P51794"/>
<dbReference type="FunCoup" id="P51794">
    <property type="interactions" value="1837"/>
</dbReference>
<dbReference type="STRING" id="10116.ENSRNOP00000056037"/>
<dbReference type="GlyGen" id="P51794">
    <property type="glycosylation" value="1 site"/>
</dbReference>
<dbReference type="PhosphoSitePlus" id="P51794"/>
<dbReference type="PaxDb" id="10116-ENSRNOP00000056037"/>
<dbReference type="PeptideAtlas" id="P51794"/>
<dbReference type="AGR" id="RGD:708381"/>
<dbReference type="RGD" id="708381">
    <property type="gene designation" value="Clcn4"/>
</dbReference>
<dbReference type="eggNOG" id="KOG0475">
    <property type="taxonomic scope" value="Eukaryota"/>
</dbReference>
<dbReference type="InParanoid" id="P51794"/>
<dbReference type="Reactome" id="R-RNO-2672351">
    <property type="pathway name" value="Stimuli-sensing channels"/>
</dbReference>
<dbReference type="PRO" id="PR:P51794"/>
<dbReference type="Proteomes" id="UP000002494">
    <property type="component" value="Unplaced"/>
</dbReference>
<dbReference type="GO" id="GO:0097546">
    <property type="term" value="C:ciliary base"/>
    <property type="evidence" value="ECO:0000266"/>
    <property type="project" value="RGD"/>
</dbReference>
<dbReference type="GO" id="GO:0005769">
    <property type="term" value="C:early endosome"/>
    <property type="evidence" value="ECO:0000318"/>
    <property type="project" value="GO_Central"/>
</dbReference>
<dbReference type="GO" id="GO:0031901">
    <property type="term" value="C:early endosome membrane"/>
    <property type="evidence" value="ECO:0007669"/>
    <property type="project" value="UniProtKB-SubCell"/>
</dbReference>
<dbReference type="GO" id="GO:0005789">
    <property type="term" value="C:endoplasmic reticulum membrane"/>
    <property type="evidence" value="ECO:0000250"/>
    <property type="project" value="UniProtKB"/>
</dbReference>
<dbReference type="GO" id="GO:0010008">
    <property type="term" value="C:endosome membrane"/>
    <property type="evidence" value="ECO:0000250"/>
    <property type="project" value="UniProtKB"/>
</dbReference>
<dbReference type="GO" id="GO:0005794">
    <property type="term" value="C:Golgi apparatus"/>
    <property type="evidence" value="ECO:0000318"/>
    <property type="project" value="GO_Central"/>
</dbReference>
<dbReference type="GO" id="GO:0031902">
    <property type="term" value="C:late endosome membrane"/>
    <property type="evidence" value="ECO:0007669"/>
    <property type="project" value="UniProtKB-SubCell"/>
</dbReference>
<dbReference type="GO" id="GO:0005765">
    <property type="term" value="C:lysosomal membrane"/>
    <property type="evidence" value="ECO:0000250"/>
    <property type="project" value="UniProtKB"/>
</dbReference>
<dbReference type="GO" id="GO:0005886">
    <property type="term" value="C:plasma membrane"/>
    <property type="evidence" value="ECO:0000318"/>
    <property type="project" value="GO_Central"/>
</dbReference>
<dbReference type="GO" id="GO:0055037">
    <property type="term" value="C:recycling endosome"/>
    <property type="evidence" value="ECO:0000250"/>
    <property type="project" value="UniProtKB"/>
</dbReference>
<dbReference type="GO" id="GO:0055038">
    <property type="term" value="C:recycling endosome membrane"/>
    <property type="evidence" value="ECO:0007669"/>
    <property type="project" value="UniProtKB-SubCell"/>
</dbReference>
<dbReference type="GO" id="GO:0008021">
    <property type="term" value="C:synaptic vesicle"/>
    <property type="evidence" value="ECO:0000318"/>
    <property type="project" value="GO_Central"/>
</dbReference>
<dbReference type="GO" id="GO:0015297">
    <property type="term" value="F:antiporter activity"/>
    <property type="evidence" value="ECO:0000250"/>
    <property type="project" value="UniProtKB"/>
</dbReference>
<dbReference type="GO" id="GO:0005524">
    <property type="term" value="F:ATP binding"/>
    <property type="evidence" value="ECO:0007669"/>
    <property type="project" value="UniProtKB-KW"/>
</dbReference>
<dbReference type="GO" id="GO:0005254">
    <property type="term" value="F:chloride channel activity"/>
    <property type="evidence" value="ECO:0000266"/>
    <property type="project" value="RGD"/>
</dbReference>
<dbReference type="GO" id="GO:0005247">
    <property type="term" value="F:voltage-gated chloride channel activity"/>
    <property type="evidence" value="ECO:0000318"/>
    <property type="project" value="GO_Central"/>
</dbReference>
<dbReference type="GO" id="GO:0006821">
    <property type="term" value="P:chloride transport"/>
    <property type="evidence" value="ECO:0000250"/>
    <property type="project" value="UniProtKB"/>
</dbReference>
<dbReference type="GO" id="GO:1905515">
    <property type="term" value="P:non-motile cilium assembly"/>
    <property type="evidence" value="ECO:0000266"/>
    <property type="project" value="RGD"/>
</dbReference>
<dbReference type="CDD" id="cd04591">
    <property type="entry name" value="CBS_pair_voltage-gated_CLC_euk_bac"/>
    <property type="match status" value="1"/>
</dbReference>
<dbReference type="CDD" id="cd03684">
    <property type="entry name" value="ClC_3_like"/>
    <property type="match status" value="1"/>
</dbReference>
<dbReference type="FunFam" id="3.10.580.20:FF:000001">
    <property type="entry name" value="Chloride channel protein"/>
    <property type="match status" value="1"/>
</dbReference>
<dbReference type="FunFam" id="3.90.1280.20:FF:000001">
    <property type="entry name" value="Chloride channel protein"/>
    <property type="match status" value="1"/>
</dbReference>
<dbReference type="FunFam" id="3.90.1280.20:FF:000002">
    <property type="entry name" value="Chloride channel protein"/>
    <property type="match status" value="1"/>
</dbReference>
<dbReference type="Gene3D" id="3.10.580.20">
    <property type="match status" value="1"/>
</dbReference>
<dbReference type="Gene3D" id="3.90.1280.20">
    <property type="match status" value="1"/>
</dbReference>
<dbReference type="Gene3D" id="1.10.3080.10">
    <property type="entry name" value="Clc chloride channel"/>
    <property type="match status" value="1"/>
</dbReference>
<dbReference type="InterPro" id="IPR000644">
    <property type="entry name" value="CBS_dom"/>
</dbReference>
<dbReference type="InterPro" id="IPR046342">
    <property type="entry name" value="CBS_dom_sf"/>
</dbReference>
<dbReference type="InterPro" id="IPR014743">
    <property type="entry name" value="Cl-channel_core"/>
</dbReference>
<dbReference type="InterPro" id="IPR002246">
    <property type="entry name" value="Cl_channel-4"/>
</dbReference>
<dbReference type="InterPro" id="IPR001807">
    <property type="entry name" value="ClC"/>
</dbReference>
<dbReference type="PANTHER" id="PTHR45711">
    <property type="entry name" value="CHLORIDE CHANNEL PROTEIN"/>
    <property type="match status" value="1"/>
</dbReference>
<dbReference type="PANTHER" id="PTHR45711:SF2">
    <property type="entry name" value="H(+)_CL(-) EXCHANGE TRANSPORTER 4"/>
    <property type="match status" value="1"/>
</dbReference>
<dbReference type="Pfam" id="PF00571">
    <property type="entry name" value="CBS"/>
    <property type="match status" value="2"/>
</dbReference>
<dbReference type="Pfam" id="PF00654">
    <property type="entry name" value="Voltage_CLC"/>
    <property type="match status" value="1"/>
</dbReference>
<dbReference type="PRINTS" id="PR00762">
    <property type="entry name" value="CLCHANNEL"/>
</dbReference>
<dbReference type="PRINTS" id="PR01115">
    <property type="entry name" value="CLCHANNEL4"/>
</dbReference>
<dbReference type="SMART" id="SM00116">
    <property type="entry name" value="CBS"/>
    <property type="match status" value="2"/>
</dbReference>
<dbReference type="SUPFAM" id="SSF54631">
    <property type="entry name" value="CBS-domain pair"/>
    <property type="match status" value="1"/>
</dbReference>
<dbReference type="SUPFAM" id="SSF81340">
    <property type="entry name" value="Clc chloride channel"/>
    <property type="match status" value="1"/>
</dbReference>
<dbReference type="PROSITE" id="PS51371">
    <property type="entry name" value="CBS"/>
    <property type="match status" value="2"/>
</dbReference>
<name>CLCN4_RAT</name>
<reference key="1">
    <citation type="journal article" date="1995" name="J. Physiol. (Lond.)">
        <title>Properties of voltage-gated chloride channels of the ClC gene family.</title>
        <authorList>
            <person name="Jentsch T.J."/>
            <person name="Guenther W."/>
            <person name="Pusch M."/>
            <person name="Schwappach B."/>
        </authorList>
    </citation>
    <scope>NUCLEOTIDE SEQUENCE [MRNA]</scope>
    <scope>TISSUE SPECIFICITY</scope>
</reference>
<reference key="2">
    <citation type="journal article" date="2006" name="J. Cell. Physiol.">
        <title>Intracellular localization of ClC chloride channels and their ability to form hetero-oligomers.</title>
        <authorList>
            <person name="Suzuki T."/>
            <person name="Rai T."/>
            <person name="Hayama A."/>
            <person name="Sohara E."/>
            <person name="Suda S."/>
            <person name="Itoh T."/>
            <person name="Sasaki S."/>
            <person name="Uchida S."/>
        </authorList>
    </citation>
    <scope>SUBCELLULAR LOCATION</scope>
</reference>